<feature type="chain" id="PRO_0000451449" description="7alpha-hydroxysteroid dehydrogenase">
    <location>
        <begin position="1"/>
        <end position="262"/>
    </location>
</feature>
<feature type="active site" description="Proton acceptor" evidence="1">
    <location>
        <position position="158"/>
    </location>
</feature>
<feature type="binding site" evidence="4 11">
    <location>
        <begin position="13"/>
        <end position="18"/>
    </location>
    <ligand>
        <name>NADP(+)</name>
        <dbReference type="ChEBI" id="CHEBI:58349"/>
    </ligand>
</feature>
<feature type="binding site" evidence="4 11">
    <location>
        <position position="38"/>
    </location>
    <ligand>
        <name>NADP(+)</name>
        <dbReference type="ChEBI" id="CHEBI:58349"/>
    </ligand>
</feature>
<feature type="binding site" evidence="4 11">
    <location>
        <begin position="63"/>
        <end position="64"/>
    </location>
    <ligand>
        <name>NADP(+)</name>
        <dbReference type="ChEBI" id="CHEBI:58349"/>
    </ligand>
</feature>
<feature type="binding site" evidence="4 11">
    <location>
        <position position="90"/>
    </location>
    <ligand>
        <name>NADP(+)</name>
        <dbReference type="ChEBI" id="CHEBI:58349"/>
    </ligand>
</feature>
<feature type="binding site" evidence="4 11">
    <location>
        <position position="145"/>
    </location>
    <ligand>
        <name>taurochenodeoxycholate</name>
        <dbReference type="ChEBI" id="CHEBI:9407"/>
    </ligand>
</feature>
<feature type="binding site" evidence="4 11">
    <location>
        <position position="158"/>
    </location>
    <ligand>
        <name>NADP(+)</name>
        <dbReference type="ChEBI" id="CHEBI:58349"/>
    </ligand>
</feature>
<feature type="binding site" evidence="4 11">
    <location>
        <position position="158"/>
    </location>
    <ligand>
        <name>taurochenodeoxycholate</name>
        <dbReference type="ChEBI" id="CHEBI:9407"/>
    </ligand>
</feature>
<feature type="binding site" evidence="4 11">
    <location>
        <position position="162"/>
    </location>
    <ligand>
        <name>NADP(+)</name>
        <dbReference type="ChEBI" id="CHEBI:58349"/>
    </ligand>
</feature>
<feature type="binding site" evidence="4 11">
    <location>
        <begin position="191"/>
        <end position="195"/>
    </location>
    <ligand>
        <name>NADP(+)</name>
        <dbReference type="ChEBI" id="CHEBI:58349"/>
    </ligand>
</feature>
<feature type="site" description="Lowers pKa of active site Tyr" evidence="1">
    <location>
        <position position="162"/>
    </location>
</feature>
<feature type="mutagenesis site" description="Loss of catalytic activity." evidence="3">
    <original>R</original>
    <variation>D</variation>
    <location>
        <position position="38"/>
    </location>
</feature>
<feature type="mutagenesis site" description="5-fold reduction in catalytic efficiency." evidence="3">
    <location>
        <begin position="261"/>
        <end position="262"/>
    </location>
</feature>
<feature type="turn" evidence="12">
    <location>
        <begin position="3"/>
        <end position="6"/>
    </location>
</feature>
<feature type="strand" evidence="12">
    <location>
        <begin position="8"/>
        <end position="13"/>
    </location>
</feature>
<feature type="helix" evidence="12">
    <location>
        <begin position="17"/>
        <end position="28"/>
    </location>
</feature>
<feature type="strand" evidence="12">
    <location>
        <begin position="32"/>
        <end position="38"/>
    </location>
</feature>
<feature type="helix" evidence="12">
    <location>
        <begin position="40"/>
        <end position="52"/>
    </location>
</feature>
<feature type="strand" evidence="12">
    <location>
        <begin position="56"/>
        <end position="61"/>
    </location>
</feature>
<feature type="helix" evidence="12">
    <location>
        <begin position="68"/>
        <end position="81"/>
    </location>
</feature>
<feature type="strand" evidence="12">
    <location>
        <begin position="86"/>
        <end position="89"/>
    </location>
</feature>
<feature type="turn" evidence="12">
    <location>
        <begin position="96"/>
        <end position="98"/>
    </location>
</feature>
<feature type="turn" evidence="12">
    <location>
        <begin position="102"/>
        <end position="104"/>
    </location>
</feature>
<feature type="helix" evidence="12">
    <location>
        <begin position="107"/>
        <end position="134"/>
    </location>
</feature>
<feature type="strand" evidence="12">
    <location>
        <begin position="138"/>
        <end position="143"/>
    </location>
</feature>
<feature type="helix" evidence="12">
    <location>
        <begin position="146"/>
        <end position="148"/>
    </location>
</feature>
<feature type="helix" evidence="12">
    <location>
        <begin position="156"/>
        <end position="176"/>
    </location>
</feature>
<feature type="helix" evidence="12">
    <location>
        <begin position="177"/>
        <end position="179"/>
    </location>
</feature>
<feature type="strand" evidence="12">
    <location>
        <begin position="181"/>
        <end position="188"/>
    </location>
</feature>
<feature type="helix" evidence="12">
    <location>
        <begin position="194"/>
        <end position="199"/>
    </location>
</feature>
<feature type="helix" evidence="12">
    <location>
        <begin position="202"/>
        <end position="210"/>
    </location>
</feature>
<feature type="helix" evidence="12">
    <location>
        <begin position="220"/>
        <end position="231"/>
    </location>
</feature>
<feature type="helix" evidence="12">
    <location>
        <begin position="233"/>
        <end position="235"/>
    </location>
</feature>
<feature type="strand" evidence="12">
    <location>
        <begin position="242"/>
        <end position="246"/>
    </location>
</feature>
<feature type="turn" evidence="12">
    <location>
        <begin position="247"/>
        <end position="250"/>
    </location>
</feature>
<feature type="helix" evidence="12">
    <location>
        <begin position="256"/>
        <end position="259"/>
    </location>
</feature>
<proteinExistence type="evidence at protein level"/>
<name>HDHA_CLOSR</name>
<gene>
    <name evidence="6" type="primary">hdha</name>
</gene>
<keyword id="KW-0002">3D-structure</keyword>
<keyword id="KW-0088">Bile acid catabolism</keyword>
<keyword id="KW-0903">Direct protein sequencing</keyword>
<keyword id="KW-0442">Lipid degradation</keyword>
<keyword id="KW-0443">Lipid metabolism</keyword>
<keyword id="KW-0521">NADP</keyword>
<keyword id="KW-0547">Nucleotide-binding</keyword>
<keyword id="KW-0560">Oxidoreductase</keyword>
<keyword id="KW-0753">Steroid metabolism</keyword>
<evidence type="ECO:0000250" key="1">
    <source>
        <dbReference type="UniProtKB" id="P0AET8"/>
    </source>
</evidence>
<evidence type="ECO:0000269" key="2">
    <source>
    </source>
</evidence>
<evidence type="ECO:0000269" key="3">
    <source>
    </source>
</evidence>
<evidence type="ECO:0000269" key="4">
    <source>
    </source>
</evidence>
<evidence type="ECO:0000269" key="5">
    <source>
    </source>
</evidence>
<evidence type="ECO:0000303" key="6">
    <source>
    </source>
</evidence>
<evidence type="ECO:0000303" key="7">
    <source>
    </source>
</evidence>
<evidence type="ECO:0000305" key="8"/>
<evidence type="ECO:0000305" key="9">
    <source>
    </source>
</evidence>
<evidence type="ECO:0000305" key="10">
    <source>
    </source>
</evidence>
<evidence type="ECO:0007744" key="11">
    <source>
        <dbReference type="PDB" id="5EPO"/>
    </source>
</evidence>
<evidence type="ECO:0007829" key="12">
    <source>
        <dbReference type="PDB" id="5EPO"/>
    </source>
</evidence>
<protein>
    <recommendedName>
        <fullName evidence="6 7">7alpha-hydroxysteroid dehydrogenase</fullName>
        <shortName evidence="6 7">7alpha-HSDH</shortName>
        <ecNumber evidence="2 3">1.1.1.-</ecNumber>
    </recommendedName>
    <alternativeName>
        <fullName evidence="6">NADP-dependent 7alpha-hydroxysteroid dehydrogenase</fullName>
    </alternativeName>
</protein>
<organism>
    <name type="scientific">Clostridium sardiniense</name>
    <name type="common">Clostridium absonum</name>
    <dbReference type="NCBI Taxonomy" id="29369"/>
    <lineage>
        <taxon>Bacteria</taxon>
        <taxon>Bacillati</taxon>
        <taxon>Bacillota</taxon>
        <taxon>Clostridia</taxon>
        <taxon>Eubacteriales</taxon>
        <taxon>Clostridiaceae</taxon>
        <taxon>Clostridium</taxon>
    </lineage>
</organism>
<dbReference type="EC" id="1.1.1.-" evidence="2 3"/>
<dbReference type="EMBL" id="JN191345">
    <property type="protein sequence ID" value="AET80685.1"/>
    <property type="molecule type" value="Genomic_DNA"/>
</dbReference>
<dbReference type="RefSeq" id="WP_221858493.1">
    <property type="nucleotide sequence ID" value="NZ_JAIKTU010000001.1"/>
</dbReference>
<dbReference type="PDB" id="5EPO">
    <property type="method" value="X-ray"/>
    <property type="resolution" value="2.00 A"/>
    <property type="chains" value="A/B/C/D=1-262"/>
</dbReference>
<dbReference type="PDBsum" id="5EPO"/>
<dbReference type="SMR" id="G9FRD7"/>
<dbReference type="SwissLipids" id="SLP:000001737"/>
<dbReference type="BRENDA" id="1.1.1.159">
    <property type="organism ID" value="1450"/>
</dbReference>
<dbReference type="EvolutionaryTrace" id="G9FRD7"/>
<dbReference type="GO" id="GO:0000166">
    <property type="term" value="F:nucleotide binding"/>
    <property type="evidence" value="ECO:0007669"/>
    <property type="project" value="UniProtKB-KW"/>
</dbReference>
<dbReference type="GO" id="GO:0016491">
    <property type="term" value="F:oxidoreductase activity"/>
    <property type="evidence" value="ECO:0007669"/>
    <property type="project" value="UniProtKB-KW"/>
</dbReference>
<dbReference type="GO" id="GO:0030573">
    <property type="term" value="P:bile acid catabolic process"/>
    <property type="evidence" value="ECO:0007669"/>
    <property type="project" value="UniProtKB-KW"/>
</dbReference>
<dbReference type="GO" id="GO:0016042">
    <property type="term" value="P:lipid catabolic process"/>
    <property type="evidence" value="ECO:0007669"/>
    <property type="project" value="UniProtKB-KW"/>
</dbReference>
<dbReference type="CDD" id="cd05233">
    <property type="entry name" value="SDR_c"/>
    <property type="match status" value="1"/>
</dbReference>
<dbReference type="FunFam" id="3.40.50.720:FF:000084">
    <property type="entry name" value="Short-chain dehydrogenase reductase"/>
    <property type="match status" value="1"/>
</dbReference>
<dbReference type="Gene3D" id="3.40.50.720">
    <property type="entry name" value="NAD(P)-binding Rossmann-like Domain"/>
    <property type="match status" value="1"/>
</dbReference>
<dbReference type="InterPro" id="IPR036291">
    <property type="entry name" value="NAD(P)-bd_dom_sf"/>
</dbReference>
<dbReference type="InterPro" id="IPR050259">
    <property type="entry name" value="SDR"/>
</dbReference>
<dbReference type="InterPro" id="IPR002347">
    <property type="entry name" value="SDR_fam"/>
</dbReference>
<dbReference type="NCBIfam" id="NF005559">
    <property type="entry name" value="PRK07231.1"/>
    <property type="match status" value="1"/>
</dbReference>
<dbReference type="PANTHER" id="PTHR42879">
    <property type="entry name" value="3-OXOACYL-(ACYL-CARRIER-PROTEIN) REDUCTASE"/>
    <property type="match status" value="1"/>
</dbReference>
<dbReference type="PANTHER" id="PTHR42879:SF2">
    <property type="entry name" value="3-OXOACYL-[ACYL-CARRIER-PROTEIN] REDUCTASE FABG"/>
    <property type="match status" value="1"/>
</dbReference>
<dbReference type="Pfam" id="PF13561">
    <property type="entry name" value="adh_short_C2"/>
    <property type="match status" value="1"/>
</dbReference>
<dbReference type="PRINTS" id="PR00081">
    <property type="entry name" value="GDHRDH"/>
</dbReference>
<dbReference type="PRINTS" id="PR00080">
    <property type="entry name" value="SDRFAMILY"/>
</dbReference>
<dbReference type="SUPFAM" id="SSF51735">
    <property type="entry name" value="NAD(P)-binding Rossmann-fold domains"/>
    <property type="match status" value="1"/>
</dbReference>
<reference key="1">
    <citation type="journal article" date="2012" name="Appl. Microbiol. Biotechnol.">
        <title>In search of sustainable chemical processes: cloning, recombinant expression, and functional characterization of the 7alpha- and 7beta-hydroxysteroid dehydrogenases from Clostridium absonum.</title>
        <authorList>
            <person name="Ferrandi E.E."/>
            <person name="Bertolesi G.M."/>
            <person name="Polentini F."/>
            <person name="Negri A."/>
            <person name="Riva S."/>
            <person name="Monti D."/>
        </authorList>
    </citation>
    <scope>NUCLEOTIDE SEQUENCE [GENOMIC DNA]</scope>
    <scope>PROTEIN SEQUENCE OF 1-27</scope>
    <scope>FUNCTION</scope>
    <scope>CATALYTIC ACTIVITY</scope>
    <scope>BIOPHYSICOCHEMICAL PROPERTIES</scope>
    <scope>SUBUNIT</scope>
    <scope>BIOTECHNOLOGY</scope>
    <source>
        <strain>ATCC 27555 / DSM 599 / CIP 104302 / JCM 1381 / NCTC 10984 / HA 7103</strain>
    </source>
</reference>
<reference key="2">
    <citation type="journal article" date="1981" name="Biochim. Biophys. Acta">
        <title>Bile induction of 7 alpha- and 7 beta-hydroxysteroid dehydrogenases in Clostridium absonum.</title>
        <authorList>
            <person name="MacDonald I.A."/>
            <person name="Roach P.D."/>
        </authorList>
    </citation>
    <scope>INDUCTION BY BILE ACIDS</scope>
</reference>
<reference key="3">
    <citation type="journal article" date="2014" name="Protein Pept. Lett.">
        <title>Carboxyl-terminal and Arg38 are essential for activity of the 7alpha-hydroxysteroid dehydrogenase from Clostridium absonum.</title>
        <authorList>
            <person name="Lou D."/>
            <person name="Wang B."/>
            <person name="Tan J."/>
            <person name="Zhu L."/>
        </authorList>
    </citation>
    <scope>FUNCTION</scope>
    <scope>CATALYTIC ACTIVITY</scope>
    <scope>ACTIVITY REGULATION</scope>
    <scope>BIOPHYSICOCHEMICAL PROPERTIES</scope>
    <scope>MUTAGENESIS OF ARG-38 AND 261-PRO-ARG-262</scope>
</reference>
<reference evidence="11" key="4">
    <citation type="journal article" date="2016" name="Sci. Rep.">
        <title>The three-dimensional structure of Clostridium absonum 7alpha-hydroxysteroid dehydrogenase: new insights into the conserved arginines for NADP(H) recognition.</title>
        <authorList>
            <person name="Lou D."/>
            <person name="Wang B."/>
            <person name="Tan J."/>
            <person name="Zhu L."/>
            <person name="Cen X."/>
            <person name="Ji Q."/>
            <person name="Wang Y."/>
        </authorList>
    </citation>
    <scope>X-RAY CRYSTALLOGRAPHY (2.00 ANGSTROMS) IN COMPLEX WITH NADP AND TAUROCHENODEOXYCHOLATE</scope>
    <scope>SUBUNIT</scope>
</reference>
<comment type="function">
    <text evidence="2 3">7alpha-hydroxysteroid dehydrogenase that catalyzes the NADP(+)-dependent oxidation of the 7alpha-hydroxy group of 7alpha-hydroxysteroids, such as cholate, chenodeoxycholate, glycochenodeoxycholate and taurochenodeoxycholate, to the corresponding 7-oxosteroids (PubMed:22198717, PubMed:24810359). Is also able to catalyze the reverse reduction reactions (PubMed:22198717). Together with 7beta-HSDH encoded in the adjacent gene, is likely involved in the epimerization of the hydroxy group at C-7 of primary bile acids through 7-keto bile acid intermediates (PubMed:22198717).</text>
</comment>
<comment type="catalytic activity">
    <reaction evidence="2">
        <text>cholate + NADP(+) = 3alpha,12alpha-dihydroxy-7-oxo-5beta-cholanate + NADPH + H(+)</text>
        <dbReference type="Rhea" id="RHEA:48508"/>
        <dbReference type="ChEBI" id="CHEBI:11893"/>
        <dbReference type="ChEBI" id="CHEBI:15378"/>
        <dbReference type="ChEBI" id="CHEBI:29747"/>
        <dbReference type="ChEBI" id="CHEBI:57783"/>
        <dbReference type="ChEBI" id="CHEBI:58349"/>
    </reaction>
    <physiologicalReaction direction="left-to-right" evidence="9">
        <dbReference type="Rhea" id="RHEA:48509"/>
    </physiologicalReaction>
</comment>
<comment type="catalytic activity">
    <reaction evidence="2 3">
        <text>chenodeoxycholate + NADP(+) = 7-oxolithocholate + NADPH + H(+)</text>
        <dbReference type="Rhea" id="RHEA:53820"/>
        <dbReference type="ChEBI" id="CHEBI:15378"/>
        <dbReference type="ChEBI" id="CHEBI:36234"/>
        <dbReference type="ChEBI" id="CHEBI:57783"/>
        <dbReference type="ChEBI" id="CHEBI:58349"/>
        <dbReference type="ChEBI" id="CHEBI:78605"/>
    </reaction>
    <physiologicalReaction direction="left-to-right" evidence="9">
        <dbReference type="Rhea" id="RHEA:53821"/>
    </physiologicalReaction>
</comment>
<comment type="catalytic activity">
    <reaction evidence="2">
        <text>3alpha,7alpha-dihydroxy-12-oxo-5beta-cholanate + NADP(+) = 7,12-dioxo-lithocholate + NADPH + H(+)</text>
        <dbReference type="Rhea" id="RHEA:53840"/>
        <dbReference type="ChEBI" id="CHEBI:11901"/>
        <dbReference type="ChEBI" id="CHEBI:15378"/>
        <dbReference type="ChEBI" id="CHEBI:57783"/>
        <dbReference type="ChEBI" id="CHEBI:58349"/>
        <dbReference type="ChEBI" id="CHEBI:137789"/>
    </reaction>
    <physiologicalReaction direction="left-to-right" evidence="9">
        <dbReference type="Rhea" id="RHEA:53841"/>
    </physiologicalReaction>
</comment>
<comment type="catalytic activity">
    <reaction evidence="2">
        <text>7alpha-hydroxy-3,12-dioxo-5beta-cholanate + NADP(+) = dehydrocholate + NADPH + H(+)</text>
        <dbReference type="Rhea" id="RHEA:65024"/>
        <dbReference type="ChEBI" id="CHEBI:15378"/>
        <dbReference type="ChEBI" id="CHEBI:57783"/>
        <dbReference type="ChEBI" id="CHEBI:58349"/>
        <dbReference type="ChEBI" id="CHEBI:137881"/>
        <dbReference type="ChEBI" id="CHEBI:156270"/>
    </reaction>
    <physiologicalReaction direction="left-to-right" evidence="9">
        <dbReference type="Rhea" id="RHEA:65025"/>
    </physiologicalReaction>
</comment>
<comment type="catalytic activity">
    <reaction evidence="3">
        <text>glycochenodeoxycholate + NADP(+) = 7-oxoglycolithocholate + NADPH + H(+)</text>
        <dbReference type="Rhea" id="RHEA:65056"/>
        <dbReference type="ChEBI" id="CHEBI:15378"/>
        <dbReference type="ChEBI" id="CHEBI:36252"/>
        <dbReference type="ChEBI" id="CHEBI:57783"/>
        <dbReference type="ChEBI" id="CHEBI:58349"/>
        <dbReference type="ChEBI" id="CHEBI:137818"/>
    </reaction>
    <physiologicalReaction direction="left-to-right" evidence="10">
        <dbReference type="Rhea" id="RHEA:65057"/>
    </physiologicalReaction>
</comment>
<comment type="catalytic activity">
    <reaction evidence="3">
        <text>taurochenodeoxycholate + NADP(+) = 7-oxotaurolithocholate + NADPH + H(+)</text>
        <dbReference type="Rhea" id="RHEA:65060"/>
        <dbReference type="ChEBI" id="CHEBI:9407"/>
        <dbReference type="ChEBI" id="CHEBI:15378"/>
        <dbReference type="ChEBI" id="CHEBI:57783"/>
        <dbReference type="ChEBI" id="CHEBI:58349"/>
        <dbReference type="ChEBI" id="CHEBI:137724"/>
    </reaction>
    <physiologicalReaction direction="left-to-right" evidence="10">
        <dbReference type="Rhea" id="RHEA:65061"/>
    </physiologicalReaction>
</comment>
<comment type="activity regulation">
    <text evidence="3">Activated by metal ions such as Mg(2+), Na(+) and K(+).</text>
</comment>
<comment type="biophysicochemical properties">
    <kinetics>
        <KM evidence="2">1.06 mM for cholate</KM>
        <KM evidence="2">0.96 mM for 3alpha,12alpha-dihydroxy-7-oxo-5beta-cholanate</KM>
        <KM evidence="2">0.09 mM for chenodeoxycholate</KM>
        <KM evidence="2">0.13 mM for 7-oxolithocholate</KM>
        <KM evidence="2">5.7 mM for 3alpha,7alpha-dihydroxy-12-oxo-5beta-cholanate</KM>
        <KM evidence="2">1.14 mM for 7,12-dioxo-lithocholate</KM>
        <KM evidence="2">3.5 mM for dehydrocholate</KM>
        <KM evidence="3">0.013 mM for chenodeoxycholate</KM>
        <KM evidence="3">0.012 mM for glycochenodeoxycholate</KM>
        <KM evidence="3">0.016 mM for taurochenodeoxycholate</KM>
        <text evidence="2 3">kcat is 343000 sec(-1) for the oxidation of cholate. kcat is 13600 sec(-1) for the reduction of 3alpha,12alpha-dihydroxy-7-oxo-5beta-cholanate. kcat is 9390 sec(-1) for the oxidation of chenodeoxycholate. kcat is 977 sec(-1) for the reduction of 7-oxolithocholate. kcat is 222000 sec(-1) for the oxidation of 3alpha,7alpha-dihydroxy-12-oxo-5beta-cholanate. kcat is 30600 sec(-1) for the reduction of 7,12-dioxo-lithocholate. kcat is 22600 sec(-1) for the reduction of dehydrocholate (PubMed:22198717). kcat is 21.2 sec(-1) for the oxidation of chenodeoxycholate. kcat is 19.6 sec(-1) for the oxidation of glycochenodeoxycholate. kcat is 11.5 sec(-1) for the oxidation of taurochenodeoxycholate (PubMed:24810359).</text>
    </kinetics>
    <phDependence>
        <text evidence="2">Shows a maximum of activity between pH 7.5 and 8.0 both in the oxidation reaction of cholate and in the reduction reaction of 3alpha,12alpha-dihydroxy-7-oxo-5beta-cholanate.</text>
    </phDependence>
    <temperatureDependence>
        <text evidence="2">Optimum temperature is 40 degrees Celsius. No activity is detected above 60 degrees Celsius.</text>
    </temperatureDependence>
</comment>
<comment type="subunit">
    <text evidence="2 4">Homotetramer (PubMed:22198717, PubMed:26961171). A dynamic equilibrium between dimers and tetramers seems to exist (PubMed:26961171).</text>
</comment>
<comment type="induction">
    <text evidence="5">Up-regulated by bile acids, when grown in the presence of deoxycholate or chenodeoxycholate.</text>
</comment>
<comment type="biotechnology">
    <text evidence="9">Could be a promising candidate for further applications in the epimerization reaction of bile acids at the C-7 position and thus may be used as a biocatalyst for the synthesis of bile acids derivatives of pharmacological interest.</text>
</comment>
<comment type="similarity">
    <text evidence="8">Belongs to the short-chain dehydrogenases/reductases (SDR) family.</text>
</comment>
<sequence>MKRLEGKVAIVTSSTRGIGRASAEALAKEGALVYLAARSEELANEVIADIKKQGGVAKFVYFNAREEETYTSMVEKVAEAEGRIDILVNNYGGTNVNLDKNLTAGDTDEFFRILKDNVQSVYLPAKAAIPHMEKVGGGSIVNISTIGSVVPDISRIAYCVSKSAINSLTQNIALQYARKNIRCNAVLPGLIGTRAALENMTDEFRDSFLGHVPLNRVGRPEDIANAVLYYASDDSGYVTGMIHEVAGGFALGTPQYSEYCPR</sequence>
<accession>G9FRD7</accession>